<reference key="1">
    <citation type="journal article" date="2008" name="J. Bacteriol.">
        <title>Insights into plant cell wall degradation from the genome sequence of the soil bacterium Cellvibrio japonicus.</title>
        <authorList>
            <person name="DeBoy R.T."/>
            <person name="Mongodin E.F."/>
            <person name="Fouts D.E."/>
            <person name="Tailford L.E."/>
            <person name="Khouri H."/>
            <person name="Emerson J.B."/>
            <person name="Mohamoud Y."/>
            <person name="Watkins K."/>
            <person name="Henrissat B."/>
            <person name="Gilbert H.J."/>
            <person name="Nelson K.E."/>
        </authorList>
    </citation>
    <scope>NUCLEOTIDE SEQUENCE [LARGE SCALE GENOMIC DNA]</scope>
    <source>
        <strain>Ueda107</strain>
    </source>
</reference>
<dbReference type="EC" id="5.3.1.12" evidence="1"/>
<dbReference type="EMBL" id="CP000934">
    <property type="protein sequence ID" value="ACE83805.1"/>
    <property type="molecule type" value="Genomic_DNA"/>
</dbReference>
<dbReference type="RefSeq" id="WP_012488366.1">
    <property type="nucleotide sequence ID" value="NC_010995.1"/>
</dbReference>
<dbReference type="SMR" id="B3PBK5"/>
<dbReference type="STRING" id="498211.CJA_2772"/>
<dbReference type="KEGG" id="cja:CJA_2772"/>
<dbReference type="eggNOG" id="COG1904">
    <property type="taxonomic scope" value="Bacteria"/>
</dbReference>
<dbReference type="HOGENOM" id="CLU_044465_1_0_6"/>
<dbReference type="OrthoDB" id="9766564at2"/>
<dbReference type="UniPathway" id="UPA00246"/>
<dbReference type="Proteomes" id="UP000001036">
    <property type="component" value="Chromosome"/>
</dbReference>
<dbReference type="GO" id="GO:0008880">
    <property type="term" value="F:glucuronate isomerase activity"/>
    <property type="evidence" value="ECO:0007669"/>
    <property type="project" value="UniProtKB-UniRule"/>
</dbReference>
<dbReference type="GO" id="GO:0019698">
    <property type="term" value="P:D-galacturonate catabolic process"/>
    <property type="evidence" value="ECO:0007669"/>
    <property type="project" value="TreeGrafter"/>
</dbReference>
<dbReference type="GO" id="GO:0042840">
    <property type="term" value="P:D-glucuronate catabolic process"/>
    <property type="evidence" value="ECO:0007669"/>
    <property type="project" value="TreeGrafter"/>
</dbReference>
<dbReference type="Gene3D" id="3.20.20.140">
    <property type="entry name" value="Metal-dependent hydrolases"/>
    <property type="match status" value="1"/>
</dbReference>
<dbReference type="Gene3D" id="1.10.2020.10">
    <property type="entry name" value="uronate isomerase, domain 2, chain A"/>
    <property type="match status" value="1"/>
</dbReference>
<dbReference type="HAMAP" id="MF_00675">
    <property type="entry name" value="UxaC"/>
    <property type="match status" value="1"/>
</dbReference>
<dbReference type="InterPro" id="IPR032466">
    <property type="entry name" value="Metal_Hydrolase"/>
</dbReference>
<dbReference type="InterPro" id="IPR003766">
    <property type="entry name" value="Uronate_isomerase"/>
</dbReference>
<dbReference type="NCBIfam" id="NF002794">
    <property type="entry name" value="PRK02925.1"/>
    <property type="match status" value="1"/>
</dbReference>
<dbReference type="PANTHER" id="PTHR30068">
    <property type="entry name" value="URONATE ISOMERASE"/>
    <property type="match status" value="1"/>
</dbReference>
<dbReference type="PANTHER" id="PTHR30068:SF4">
    <property type="entry name" value="URONATE ISOMERASE"/>
    <property type="match status" value="1"/>
</dbReference>
<dbReference type="Pfam" id="PF02614">
    <property type="entry name" value="UxaC"/>
    <property type="match status" value="1"/>
</dbReference>
<dbReference type="SUPFAM" id="SSF51556">
    <property type="entry name" value="Metallo-dependent hydrolases"/>
    <property type="match status" value="1"/>
</dbReference>
<protein>
    <recommendedName>
        <fullName evidence="1">Uronate isomerase</fullName>
        <ecNumber evidence="1">5.3.1.12</ecNumber>
    </recommendedName>
    <alternativeName>
        <fullName evidence="1">Glucuronate isomerase</fullName>
    </alternativeName>
    <alternativeName>
        <fullName evidence="1">Uronic isomerase</fullName>
    </alternativeName>
</protein>
<sequence length="471" mass="54565">MSFIHDDFLLDTQQAKVLYHEYAKNMPIIDYHCHLPPEQVGQNKQFRNLYEVWLAGDHYKWRAMRSNGVDERYCTGNASDWEKFEKWCETVPYTLRNPLYHWTHLELRKPFGITDRLLDSRSAKRTWDECNELLATPEFSARGLMTQANVKLVCTTDDPIHDLAHHKTVAADKSFKTAMLPTWRPDRAMMVEDAESYNKYLDRLAITADININTFDDLIKALQIRHDYFHENGCRLSDHGLETVYAADYTDSEIKAIFLKIRAHKQLDAVEIEKFQSAMMVEFALQDHAKGWVQQFHIGAIRNNNPRLFRTLGPDTGFDSIGDHNYAKPLAKFLGRLDDQNKLAKTILYNLNPRDNEMIGTMIGNFQDGSAAGKIQFGSGWWFLDQMEGMTRQIEALSQLGLLSRFVGMLTDSRSFLSYSRHEYFRRILCGIFGRDMVKGLVPDDTHMVGKMIQDISFNNAKNYFPFVVPE</sequence>
<keyword id="KW-0413">Isomerase</keyword>
<keyword id="KW-1185">Reference proteome</keyword>
<evidence type="ECO:0000255" key="1">
    <source>
        <dbReference type="HAMAP-Rule" id="MF_00675"/>
    </source>
</evidence>
<name>UXAC_CELJU</name>
<gene>
    <name evidence="1" type="primary">uxaC</name>
    <name type="ordered locus">CJA_2772</name>
</gene>
<comment type="catalytic activity">
    <reaction evidence="1">
        <text>D-glucuronate = D-fructuronate</text>
        <dbReference type="Rhea" id="RHEA:13049"/>
        <dbReference type="ChEBI" id="CHEBI:58720"/>
        <dbReference type="ChEBI" id="CHEBI:59863"/>
        <dbReference type="EC" id="5.3.1.12"/>
    </reaction>
</comment>
<comment type="catalytic activity">
    <reaction evidence="1">
        <text>aldehydo-D-galacturonate = keto-D-tagaturonate</text>
        <dbReference type="Rhea" id="RHEA:27702"/>
        <dbReference type="ChEBI" id="CHEBI:12952"/>
        <dbReference type="ChEBI" id="CHEBI:17886"/>
        <dbReference type="EC" id="5.3.1.12"/>
    </reaction>
</comment>
<comment type="pathway">
    <text evidence="1">Carbohydrate metabolism; pentose and glucuronate interconversion.</text>
</comment>
<comment type="similarity">
    <text evidence="1">Belongs to the metallo-dependent hydrolases superfamily. Uronate isomerase family.</text>
</comment>
<organism>
    <name type="scientific">Cellvibrio japonicus (strain Ueda107)</name>
    <name type="common">Pseudomonas fluorescens subsp. cellulosa</name>
    <dbReference type="NCBI Taxonomy" id="498211"/>
    <lineage>
        <taxon>Bacteria</taxon>
        <taxon>Pseudomonadati</taxon>
        <taxon>Pseudomonadota</taxon>
        <taxon>Gammaproteobacteria</taxon>
        <taxon>Cellvibrionales</taxon>
        <taxon>Cellvibrionaceae</taxon>
        <taxon>Cellvibrio</taxon>
    </lineage>
</organism>
<accession>B3PBK5</accession>
<proteinExistence type="inferred from homology"/>
<feature type="chain" id="PRO_1000131587" description="Uronate isomerase">
    <location>
        <begin position="1"/>
        <end position="471"/>
    </location>
</feature>